<accession>A6QLA6</accession>
<keyword id="KW-0131">Cell cycle</keyword>
<keyword id="KW-0143">Chaperone</keyword>
<keyword id="KW-0156">Chromatin regulator</keyword>
<keyword id="KW-0175">Coiled coil</keyword>
<keyword id="KW-0227">DNA damage</keyword>
<keyword id="KW-0234">DNA repair</keyword>
<keyword id="KW-0235">DNA replication</keyword>
<keyword id="KW-1017">Isopeptide bond</keyword>
<keyword id="KW-0539">Nucleus</keyword>
<keyword id="KW-0597">Phosphoprotein</keyword>
<keyword id="KW-1185">Reference proteome</keyword>
<keyword id="KW-0832">Ubl conjugation</keyword>
<reference key="1">
    <citation type="submission" date="2007-06" db="EMBL/GenBank/DDBJ databases">
        <authorList>
            <consortium name="NIH - Mammalian Gene Collection (MGC) project"/>
        </authorList>
    </citation>
    <scope>NUCLEOTIDE SEQUENCE [LARGE SCALE MRNA]</scope>
    <source>
        <strain>Hereford</strain>
        <tissue>Thymus</tissue>
    </source>
</reference>
<feature type="chain" id="PRO_0000373881" description="Chromatin assembly factor 1 subunit A">
    <location>
        <begin position="1"/>
        <end position="964"/>
    </location>
</feature>
<feature type="region of interest" description="Binds to CBX1 chromo shadow domain" evidence="1">
    <location>
        <begin position="1"/>
        <end position="316"/>
    </location>
</feature>
<feature type="region of interest" description="Binds to PCNA" evidence="1">
    <location>
        <begin position="1"/>
        <end position="49"/>
    </location>
</feature>
<feature type="region of interest" description="Disordered" evidence="5">
    <location>
        <begin position="146"/>
        <end position="232"/>
    </location>
</feature>
<feature type="region of interest" description="Disordered" evidence="5">
    <location>
        <begin position="253"/>
        <end position="437"/>
    </location>
</feature>
<feature type="region of interest" description="Disordered" evidence="5">
    <location>
        <begin position="601"/>
        <end position="641"/>
    </location>
</feature>
<feature type="region of interest" description="Necessary for homodimerization and competence for chromatin assembly">
    <location>
        <begin position="644"/>
        <end position="680"/>
    </location>
</feature>
<feature type="region of interest" description="Binds to p60" evidence="1">
    <location>
        <begin position="662"/>
        <end position="964"/>
    </location>
</feature>
<feature type="region of interest" description="Disordered" evidence="5">
    <location>
        <begin position="769"/>
        <end position="799"/>
    </location>
</feature>
<feature type="region of interest" description="Disordered" evidence="5">
    <location>
        <begin position="859"/>
        <end position="878"/>
    </location>
</feature>
<feature type="region of interest" description="Disordered" evidence="5">
    <location>
        <begin position="897"/>
        <end position="920"/>
    </location>
</feature>
<feature type="region of interest" description="Disordered" evidence="5">
    <location>
        <begin position="933"/>
        <end position="964"/>
    </location>
</feature>
<feature type="coiled-coil region" evidence="4">
    <location>
        <begin position="329"/>
        <end position="453"/>
    </location>
</feature>
<feature type="short sequence motif" description="PxVxL motif" evidence="1">
    <location>
        <begin position="236"/>
        <end position="249"/>
    </location>
</feature>
<feature type="compositionally biased region" description="Basic and acidic residues" evidence="5">
    <location>
        <begin position="156"/>
        <end position="172"/>
    </location>
</feature>
<feature type="compositionally biased region" description="Low complexity" evidence="5">
    <location>
        <begin position="284"/>
        <end position="298"/>
    </location>
</feature>
<feature type="compositionally biased region" description="Basic and acidic residues" evidence="5">
    <location>
        <begin position="331"/>
        <end position="437"/>
    </location>
</feature>
<feature type="compositionally biased region" description="Acidic residues" evidence="5">
    <location>
        <begin position="601"/>
        <end position="612"/>
    </location>
</feature>
<feature type="compositionally biased region" description="Acidic residues" evidence="5">
    <location>
        <begin position="620"/>
        <end position="635"/>
    </location>
</feature>
<feature type="compositionally biased region" description="Low complexity" evidence="5">
    <location>
        <begin position="770"/>
        <end position="780"/>
    </location>
</feature>
<feature type="compositionally biased region" description="Acidic residues" evidence="5">
    <location>
        <begin position="904"/>
        <end position="920"/>
    </location>
</feature>
<feature type="compositionally biased region" description="Polar residues" evidence="5">
    <location>
        <begin position="949"/>
        <end position="964"/>
    </location>
</feature>
<feature type="modified residue" description="Phosphoserine" evidence="2">
    <location>
        <position position="126"/>
    </location>
</feature>
<feature type="modified residue" description="Phosphoserine" evidence="2">
    <location>
        <position position="141"/>
    </location>
</feature>
<feature type="modified residue" description="Phosphoserine" evidence="2">
    <location>
        <position position="144"/>
    </location>
</feature>
<feature type="modified residue" description="Phosphoserine" evidence="2">
    <location>
        <position position="312"/>
    </location>
</feature>
<feature type="modified residue" description="Phosphothreonine" evidence="2">
    <location>
        <position position="723"/>
    </location>
</feature>
<feature type="modified residue" description="Phosphoserine" evidence="2">
    <location>
        <position position="773"/>
    </location>
</feature>
<feature type="modified residue" description="Phosphoserine" evidence="2">
    <location>
        <position position="783"/>
    </location>
</feature>
<feature type="modified residue" description="Phosphoserine" evidence="2">
    <location>
        <position position="811"/>
    </location>
</feature>
<feature type="modified residue" description="Phosphoserine" evidence="2">
    <location>
        <position position="876"/>
    </location>
</feature>
<feature type="modified residue" description="Phosphoserine" evidence="2">
    <location>
        <position position="881"/>
    </location>
</feature>
<feature type="modified residue" description="Phosphoserine" evidence="2">
    <location>
        <position position="959"/>
    </location>
</feature>
<feature type="cross-link" description="Glycyl lysine isopeptide (Lys-Gly) (interchain with G-Cter in SUMO1); alternate" evidence="2">
    <location>
        <position position="185"/>
    </location>
</feature>
<feature type="cross-link" description="Glycyl lysine isopeptide (Lys-Gly) (interchain with G-Cter in SUMO2); alternate" evidence="2">
    <location>
        <position position="185"/>
    </location>
</feature>
<protein>
    <recommendedName>
        <fullName>Chromatin assembly factor 1 subunit A</fullName>
        <shortName>CAF-1 subunit A</shortName>
    </recommendedName>
    <alternativeName>
        <fullName>Chromatin assembly factor I p150 subunit</fullName>
        <shortName>CAF-I 150 kDa subunit</shortName>
        <shortName>CAF-I p150</shortName>
    </alternativeName>
</protein>
<sequence length="964" mass="107258">MLEEPECGAPGARGEAAAMDCKDRPAFPVKKLIQARLPFKRLNLVPKEKIDDGLDDTGGSRAGPVQTQLHNLETSLDHLENCHMGSDIDFRPKLVNGKGPLDNFLRSQVETSIGQAVVIIDLTEDSSNPPDNMVGHNKLNSAASSAQKNINGVPDKAGDDRGLPKARQKDELASPEEALSEVPCKTEAGGADSGGADRRGLTQRGSPQNCPKLTGDLSMWSEKDRDGWSEAGGILFKGKMPVVVLQDILALRPPARSPPATPPSQAVPSESETPESSPEEDLALSHSSLSSSSPTSSPEGQSVPTKLHTGPSPFPASTPVCRITKKLVRGSAEKNKMKLQRDKERLRRQLKLRAEKEEKEKLREEAKRAKEEARKKREEEKELKEKERREKREKDEKEKAEKQRLKEERRKERQEALEAKLEEKRKKEEEKRLREEEKRIKAEKAEITRFFQKPKTPQAPKTLAGSCGKFAPFEIKEHMVLAPRCRTAFDQDLCDQLDQLLQQQSSEFSFLQDLKSRRPLRSGPTVVSNRNTDLSNSDVVIVESSKVDGVPERRKFGRMKLLQFSENHRPAYWGTWNKKTTVIRPRDPWAQDRDLLDYEVDSDEEWEEEEPGESLSHSEGDDDDDVGEDEDEDDGFFVPHGYLSEDEGVTEECADPENHKVRQKLKAKEWDEFLAKGKRFRILQPVKIGCIWAADKDGGADLKVLQQFTACLLETVPPEEEQTPKASKREKRDQQILAQLLPLLHGNVNGSKVIIREFQECCRRGLLSRDAGSPEDSAASPPSPGPARPQTPTASEDVAVPSKARLKRIISENSVYEKRPDFRMCWYVHPQVLKSFAQEHLPVPCQWSYVTAVPSATREDSGSVPAPGPGQGMPVSLKRKSAGSMCITQFMKKRRHDGQVGTGDLDDFQADTEEEDDDEGDCVIMDISDVGDIQAPCGTTSGAGGSVGMDTSESFVSPSSLRLS</sequence>
<organism>
    <name type="scientific">Bos taurus</name>
    <name type="common">Bovine</name>
    <dbReference type="NCBI Taxonomy" id="9913"/>
    <lineage>
        <taxon>Eukaryota</taxon>
        <taxon>Metazoa</taxon>
        <taxon>Chordata</taxon>
        <taxon>Craniata</taxon>
        <taxon>Vertebrata</taxon>
        <taxon>Euteleostomi</taxon>
        <taxon>Mammalia</taxon>
        <taxon>Eutheria</taxon>
        <taxon>Laurasiatheria</taxon>
        <taxon>Artiodactyla</taxon>
        <taxon>Ruminantia</taxon>
        <taxon>Pecora</taxon>
        <taxon>Bovidae</taxon>
        <taxon>Bovinae</taxon>
        <taxon>Bos</taxon>
    </lineage>
</organism>
<dbReference type="EMBL" id="BC147896">
    <property type="protein sequence ID" value="AAI47897.1"/>
    <property type="molecule type" value="mRNA"/>
</dbReference>
<dbReference type="RefSeq" id="NP_001095312.1">
    <property type="nucleotide sequence ID" value="NM_001101842.2"/>
</dbReference>
<dbReference type="SMR" id="A6QLA6"/>
<dbReference type="FunCoup" id="A6QLA6">
    <property type="interactions" value="1398"/>
</dbReference>
<dbReference type="STRING" id="9913.ENSBTAP00000010763"/>
<dbReference type="PaxDb" id="9913-ENSBTAP00000010763"/>
<dbReference type="GeneID" id="504535"/>
<dbReference type="KEGG" id="bta:504535"/>
<dbReference type="CTD" id="10036"/>
<dbReference type="eggNOG" id="KOG4364">
    <property type="taxonomic scope" value="Eukaryota"/>
</dbReference>
<dbReference type="HOGENOM" id="CLU_014846_0_0_1"/>
<dbReference type="InParanoid" id="A6QLA6"/>
<dbReference type="OrthoDB" id="79480at2759"/>
<dbReference type="TreeFam" id="TF350377"/>
<dbReference type="Proteomes" id="UP000009136">
    <property type="component" value="Unplaced"/>
</dbReference>
<dbReference type="GO" id="GO:0033186">
    <property type="term" value="C:CAF-1 complex"/>
    <property type="evidence" value="ECO:0000250"/>
    <property type="project" value="UniProtKB"/>
</dbReference>
<dbReference type="GO" id="GO:0005634">
    <property type="term" value="C:nucleus"/>
    <property type="evidence" value="ECO:0000318"/>
    <property type="project" value="GO_Central"/>
</dbReference>
<dbReference type="GO" id="GO:0006281">
    <property type="term" value="P:DNA repair"/>
    <property type="evidence" value="ECO:0007669"/>
    <property type="project" value="UniProtKB-KW"/>
</dbReference>
<dbReference type="GO" id="GO:0006260">
    <property type="term" value="P:DNA replication"/>
    <property type="evidence" value="ECO:0007669"/>
    <property type="project" value="UniProtKB-KW"/>
</dbReference>
<dbReference type="GO" id="GO:0006335">
    <property type="term" value="P:DNA replication-dependent chromatin assembly"/>
    <property type="evidence" value="ECO:0000250"/>
    <property type="project" value="UniProtKB"/>
</dbReference>
<dbReference type="GO" id="GO:0006334">
    <property type="term" value="P:nucleosome assembly"/>
    <property type="evidence" value="ECO:0000318"/>
    <property type="project" value="GO_Central"/>
</dbReference>
<dbReference type="InterPro" id="IPR021644">
    <property type="entry name" value="CAF-1_p150_acidic"/>
</dbReference>
<dbReference type="InterPro" id="IPR029105">
    <property type="entry name" value="CAF1-p150_C2"/>
</dbReference>
<dbReference type="InterPro" id="IPR029091">
    <property type="entry name" value="CAF1_p150_N"/>
</dbReference>
<dbReference type="InterPro" id="IPR022043">
    <property type="entry name" value="CAF1A_DD"/>
</dbReference>
<dbReference type="PANTHER" id="PTHR15272:SF0">
    <property type="entry name" value="CHROMATIN ASSEMBLY FACTOR 1 SUBUNIT A"/>
    <property type="match status" value="1"/>
</dbReference>
<dbReference type="PANTHER" id="PTHR15272">
    <property type="entry name" value="CHROMATIN ASSEMBLY FACTOR 1 SUBUNIT A CAF-1 SUBUNIT A"/>
    <property type="match status" value="1"/>
</dbReference>
<dbReference type="Pfam" id="PF15539">
    <property type="entry name" value="CAF1-p150_C2"/>
    <property type="match status" value="1"/>
</dbReference>
<dbReference type="Pfam" id="PF15557">
    <property type="entry name" value="CAF1-p150_N"/>
    <property type="match status" value="1"/>
</dbReference>
<dbReference type="Pfam" id="PF11600">
    <property type="entry name" value="CAF1A_acidic"/>
    <property type="match status" value="1"/>
</dbReference>
<dbReference type="Pfam" id="PF12253">
    <property type="entry name" value="CAF1A_dimeriz"/>
    <property type="match status" value="1"/>
</dbReference>
<comment type="function">
    <text evidence="3">Acts as a component of the histone chaperone complex chromatin assembly factor 1 (CAF-1), which assembles histone octamers onto DNA during replication and repair. CAF-1 performs the first step of the nucleosome assembly process, bringing newly synthesized histones H3 and H4 to replicating DNA; histones H2A/H2B can bind to this chromatin precursor subsequent to DNA replication to complete the histone octamer. It may play a role in heterochromatin maintenance in proliferating cells by bringing newly synthesized cbx proteins to heterochromatic DNA replication foci.</text>
</comment>
<comment type="subunit">
    <text evidence="2">Homodimer. Part of the CAF-1 complex that contains RBBP4, CHAF1B and CHAF1A. CHAF1A binds directly to CHAF1B. Only minor amounts of RBBP4 are complexed with CHAF1A and CHAF1B in G1 phase. Interacts with PCNA; the interaction is direct. Interacts (via the PxVxL motif) with CBX5; the interaction is direct. Interacts with MBD1. Interacts with histones H3.1, H3.2 and H3.1t.</text>
</comment>
<comment type="subcellular location">
    <subcellularLocation>
        <location evidence="2">Nucleus</location>
    </subcellularLocation>
    <text evidence="2">DNA replication foci.</text>
</comment>
<comment type="domain">
    <text evidence="1">Contains one Pro-Xaa-Val-Xaa-Leu (PxVxL) motif, which is required for interaction with chromoshadow domains. This motif requires additional residues -7, -6, +4 and +5 of the central Val which contact the chromoshadow domain (By similarity).</text>
</comment>
<comment type="similarity">
    <text evidence="6">Belongs to the CHAF1A family.</text>
</comment>
<evidence type="ECO:0000250" key="1"/>
<evidence type="ECO:0000250" key="2">
    <source>
        <dbReference type="UniProtKB" id="Q13111"/>
    </source>
</evidence>
<evidence type="ECO:0000250" key="3">
    <source>
        <dbReference type="UniProtKB" id="Q5R1T0"/>
    </source>
</evidence>
<evidence type="ECO:0000255" key="4"/>
<evidence type="ECO:0000256" key="5">
    <source>
        <dbReference type="SAM" id="MobiDB-lite"/>
    </source>
</evidence>
<evidence type="ECO:0000305" key="6"/>
<proteinExistence type="evidence at transcript level"/>
<gene>
    <name type="primary">CHAF1A</name>
    <name type="synonym">CAF</name>
    <name type="synonym">CAF1P150</name>
</gene>
<name>CAF1A_BOVIN</name>